<feature type="signal peptide" evidence="9">
    <location>
        <begin position="1"/>
        <end position="22"/>
    </location>
</feature>
<feature type="chain" id="PRO_0000084174" description="Immunoglobulin J chain">
    <location>
        <begin position="23"/>
        <end position="159"/>
    </location>
</feature>
<feature type="modified residue" description="Pyrrolidone carboxylic acid" evidence="9 13">
    <location>
        <position position="23"/>
    </location>
</feature>
<feature type="glycosylation site" id="CAR_000167" description="N-linked (GlcNAc...) (complex) asparagine" evidence="3 4 5 6 7 8">
    <location>
        <position position="71"/>
    </location>
</feature>
<feature type="disulfide bond" evidence="2 11 15">
    <location>
        <begin position="35"/>
        <end position="123"/>
    </location>
</feature>
<feature type="disulfide bond" description="Interchain (with C-452 of IGHM)" evidence="2 11 15">
    <location>
        <position position="37"/>
    </location>
</feature>
<feature type="disulfide bond" description="Interchain (with C-452 of IGHM)" evidence="2 11 15">
    <location>
        <position position="91"/>
    </location>
</feature>
<feature type="disulfide bond" evidence="2">
    <location>
        <begin position="94"/>
        <end position="114"/>
    </location>
</feature>
<feature type="disulfide bond" evidence="2 11 15">
    <location>
        <begin position="131"/>
        <end position="156"/>
    </location>
</feature>
<feature type="strand" evidence="16">
    <location>
        <begin position="28"/>
        <end position="33"/>
    </location>
</feature>
<feature type="turn" evidence="16">
    <location>
        <begin position="34"/>
        <end position="37"/>
    </location>
</feature>
<feature type="strand" evidence="16">
    <location>
        <begin position="38"/>
        <end position="45"/>
    </location>
</feature>
<feature type="strand" evidence="16">
    <location>
        <begin position="48"/>
        <end position="50"/>
    </location>
</feature>
<feature type="strand" evidence="16">
    <location>
        <begin position="55"/>
        <end position="67"/>
    </location>
</feature>
<feature type="strand" evidence="16">
    <location>
        <begin position="70"/>
        <end position="78"/>
    </location>
</feature>
<feature type="strand" evidence="18">
    <location>
        <begin position="82"/>
        <end position="85"/>
    </location>
</feature>
<feature type="helix" evidence="16">
    <location>
        <begin position="87"/>
        <end position="90"/>
    </location>
</feature>
<feature type="strand" evidence="16">
    <location>
        <begin position="97"/>
        <end position="100"/>
    </location>
</feature>
<feature type="strand" evidence="16">
    <location>
        <begin position="102"/>
        <end position="109"/>
    </location>
</feature>
<feature type="strand" evidence="20">
    <location>
        <begin position="124"/>
        <end position="127"/>
    </location>
</feature>
<feature type="strand" evidence="19">
    <location>
        <begin position="128"/>
        <end position="130"/>
    </location>
</feature>
<feature type="strand" evidence="16">
    <location>
        <begin position="133"/>
        <end position="138"/>
    </location>
</feature>
<feature type="strand" evidence="16">
    <location>
        <begin position="141"/>
        <end position="143"/>
    </location>
</feature>
<feature type="strand" evidence="16">
    <location>
        <begin position="145"/>
        <end position="152"/>
    </location>
</feature>
<feature type="turn" evidence="17">
    <location>
        <begin position="153"/>
        <end position="155"/>
    </location>
</feature>
<proteinExistence type="evidence at protein level"/>
<organism>
    <name type="scientific">Homo sapiens</name>
    <name type="common">Human</name>
    <dbReference type="NCBI Taxonomy" id="9606"/>
    <lineage>
        <taxon>Eukaryota</taxon>
        <taxon>Metazoa</taxon>
        <taxon>Chordata</taxon>
        <taxon>Craniata</taxon>
        <taxon>Vertebrata</taxon>
        <taxon>Euteleostomi</taxon>
        <taxon>Mammalia</taxon>
        <taxon>Eutheria</taxon>
        <taxon>Euarchontoglires</taxon>
        <taxon>Primates</taxon>
        <taxon>Haplorrhini</taxon>
        <taxon>Catarrhini</taxon>
        <taxon>Hominidae</taxon>
        <taxon>Homo</taxon>
    </lineage>
</organism>
<evidence type="ECO:0000250" key="1">
    <source>
        <dbReference type="UniProtKB" id="P01592"/>
    </source>
</evidence>
<evidence type="ECO:0000269" key="2">
    <source>
    </source>
</evidence>
<evidence type="ECO:0000269" key="3">
    <source>
    </source>
</evidence>
<evidence type="ECO:0000269" key="4">
    <source>
    </source>
</evidence>
<evidence type="ECO:0000269" key="5">
    <source>
    </source>
</evidence>
<evidence type="ECO:0000269" key="6">
    <source>
    </source>
</evidence>
<evidence type="ECO:0000269" key="7">
    <source>
    </source>
</evidence>
<evidence type="ECO:0000269" key="8">
    <source>
    </source>
</evidence>
<evidence type="ECO:0000269" key="9">
    <source>
    </source>
</evidence>
<evidence type="ECO:0000269" key="10">
    <source>
    </source>
</evidence>
<evidence type="ECO:0000269" key="11">
    <source>
    </source>
</evidence>
<evidence type="ECO:0000269" key="12">
    <source>
    </source>
</evidence>
<evidence type="ECO:0000269" key="13">
    <source>
    </source>
</evidence>
<evidence type="ECO:0000312" key="14">
    <source>
        <dbReference type="HGNC" id="HGNC:5713"/>
    </source>
</evidence>
<evidence type="ECO:0007744" key="15">
    <source>
        <dbReference type="PDB" id="6KXS"/>
    </source>
</evidence>
<evidence type="ECO:0007829" key="16">
    <source>
        <dbReference type="PDB" id="6UE7"/>
    </source>
</evidence>
<evidence type="ECO:0007829" key="17">
    <source>
        <dbReference type="PDB" id="6UE8"/>
    </source>
</evidence>
<evidence type="ECO:0007829" key="18">
    <source>
        <dbReference type="PDB" id="6UE9"/>
    </source>
</evidence>
<evidence type="ECO:0007829" key="19">
    <source>
        <dbReference type="PDB" id="7K0C"/>
    </source>
</evidence>
<evidence type="ECO:0007829" key="20">
    <source>
        <dbReference type="PDB" id="7YSG"/>
    </source>
</evidence>
<comment type="function">
    <text evidence="1">Serves to link two monomer units of either IgM or IgA. In the case of IgM, the J chain-joined dimer is a nucleating unit for the IgM pentamer, and in the case of IgA it induces dimers and/or larger polymers. It also helps to bind these immunoglobulins to secretory component.</text>
</comment>
<comment type="subunit">
    <text evidence="10 11 12">Part of the secretory IgA (sIgA) complex that consists of two, four or five IgA monomers, and two additional non-Ig polypeptides, namely the JCHAIN and the secretory component (the proteolytic product of PIGR) (PubMed:32029686). Part of the secretory IgM (sIgM) complex that consists of five IgM monomers, and two additional non-Ig polypeptides, namely the JCHAIN and the secretory component (the proteolytic product of PIGR) (PubMed:32029686, PubMed:32029689). JCHAIN-containing IgM interacts (via CH4 domain) with FCRM (via Ig-like domain) (PubMed:37095205).</text>
</comment>
<comment type="subcellular location">
    <subcellularLocation>
        <location evidence="1">Secreted</location>
    </subcellularLocation>
</comment>
<accession>P01591</accession>
<protein>
    <recommendedName>
        <fullName>Immunoglobulin J chain</fullName>
    </recommendedName>
    <alternativeName>
        <fullName evidence="14">Joining chain of multimeric IgA and IgM</fullName>
    </alternativeName>
</protein>
<gene>
    <name evidence="14" type="primary">JCHAIN</name>
    <name type="synonym">IGCJ</name>
    <name type="synonym">IGJ</name>
</gene>
<name>IGJ_HUMAN</name>
<keyword id="KW-0002">3D-structure</keyword>
<keyword id="KW-0903">Direct protein sequencing</keyword>
<keyword id="KW-1015">Disulfide bond</keyword>
<keyword id="KW-0325">Glycoprotein</keyword>
<keyword id="KW-1267">Proteomics identification</keyword>
<keyword id="KW-0873">Pyrrolidone carboxylic acid</keyword>
<keyword id="KW-1185">Reference proteome</keyword>
<keyword id="KW-0964">Secreted</keyword>
<keyword id="KW-0732">Signal</keyword>
<sequence>MKNHLLFWGVLAVFIKAVHVKAQEDERIVLVDNKCKCARITSRIIRSSEDPNEDIVERNIRIIVPLNNRENISDPTSPLRTRFVYHLSDLCKKCDPTEVELDNQIVTATQSNICDEDSATETCYTYDRNKCYTAVVPLVYGGETKMVETALTPDACYPD</sequence>
<reference key="1">
    <citation type="journal article" date="2004" name="Nat. Genet.">
        <title>Complete sequencing and characterization of 21,243 full-length human cDNAs.</title>
        <authorList>
            <person name="Ota T."/>
            <person name="Suzuki Y."/>
            <person name="Nishikawa T."/>
            <person name="Otsuki T."/>
            <person name="Sugiyama T."/>
            <person name="Irie R."/>
            <person name="Wakamatsu A."/>
            <person name="Hayashi K."/>
            <person name="Sato H."/>
            <person name="Nagai K."/>
            <person name="Kimura K."/>
            <person name="Makita H."/>
            <person name="Sekine M."/>
            <person name="Obayashi M."/>
            <person name="Nishi T."/>
            <person name="Shibahara T."/>
            <person name="Tanaka T."/>
            <person name="Ishii S."/>
            <person name="Yamamoto J."/>
            <person name="Saito K."/>
            <person name="Kawai Y."/>
            <person name="Isono Y."/>
            <person name="Nakamura Y."/>
            <person name="Nagahari K."/>
            <person name="Murakami K."/>
            <person name="Yasuda T."/>
            <person name="Iwayanagi T."/>
            <person name="Wagatsuma M."/>
            <person name="Shiratori A."/>
            <person name="Sudo H."/>
            <person name="Hosoiri T."/>
            <person name="Kaku Y."/>
            <person name="Kodaira H."/>
            <person name="Kondo H."/>
            <person name="Sugawara M."/>
            <person name="Takahashi M."/>
            <person name="Kanda K."/>
            <person name="Yokoi T."/>
            <person name="Furuya T."/>
            <person name="Kikkawa E."/>
            <person name="Omura Y."/>
            <person name="Abe K."/>
            <person name="Kamihara K."/>
            <person name="Katsuta N."/>
            <person name="Sato K."/>
            <person name="Tanikawa M."/>
            <person name="Yamazaki M."/>
            <person name="Ninomiya K."/>
            <person name="Ishibashi T."/>
            <person name="Yamashita H."/>
            <person name="Murakawa K."/>
            <person name="Fujimori K."/>
            <person name="Tanai H."/>
            <person name="Kimata M."/>
            <person name="Watanabe M."/>
            <person name="Hiraoka S."/>
            <person name="Chiba Y."/>
            <person name="Ishida S."/>
            <person name="Ono Y."/>
            <person name="Takiguchi S."/>
            <person name="Watanabe S."/>
            <person name="Yosida M."/>
            <person name="Hotuta T."/>
            <person name="Kusano J."/>
            <person name="Kanehori K."/>
            <person name="Takahashi-Fujii A."/>
            <person name="Hara H."/>
            <person name="Tanase T.-O."/>
            <person name="Nomura Y."/>
            <person name="Togiya S."/>
            <person name="Komai F."/>
            <person name="Hara R."/>
            <person name="Takeuchi K."/>
            <person name="Arita M."/>
            <person name="Imose N."/>
            <person name="Musashino K."/>
            <person name="Yuuki H."/>
            <person name="Oshima A."/>
            <person name="Sasaki N."/>
            <person name="Aotsuka S."/>
            <person name="Yoshikawa Y."/>
            <person name="Matsunawa H."/>
            <person name="Ichihara T."/>
            <person name="Shiohata N."/>
            <person name="Sano S."/>
            <person name="Moriya S."/>
            <person name="Momiyama H."/>
            <person name="Satoh N."/>
            <person name="Takami S."/>
            <person name="Terashima Y."/>
            <person name="Suzuki O."/>
            <person name="Nakagawa S."/>
            <person name="Senoh A."/>
            <person name="Mizoguchi H."/>
            <person name="Goto Y."/>
            <person name="Shimizu F."/>
            <person name="Wakebe H."/>
            <person name="Hishigaki H."/>
            <person name="Watanabe T."/>
            <person name="Sugiyama A."/>
            <person name="Takemoto M."/>
            <person name="Kawakami B."/>
            <person name="Yamazaki M."/>
            <person name="Watanabe K."/>
            <person name="Kumagai A."/>
            <person name="Itakura S."/>
            <person name="Fukuzumi Y."/>
            <person name="Fujimori Y."/>
            <person name="Komiyama M."/>
            <person name="Tashiro H."/>
            <person name="Tanigami A."/>
            <person name="Fujiwara T."/>
            <person name="Ono T."/>
            <person name="Yamada K."/>
            <person name="Fujii Y."/>
            <person name="Ozaki K."/>
            <person name="Hirao M."/>
            <person name="Ohmori Y."/>
            <person name="Kawabata A."/>
            <person name="Hikiji T."/>
            <person name="Kobatake N."/>
            <person name="Inagaki H."/>
            <person name="Ikema Y."/>
            <person name="Okamoto S."/>
            <person name="Okitani R."/>
            <person name="Kawakami T."/>
            <person name="Noguchi S."/>
            <person name="Itoh T."/>
            <person name="Shigeta K."/>
            <person name="Senba T."/>
            <person name="Matsumura K."/>
            <person name="Nakajima Y."/>
            <person name="Mizuno T."/>
            <person name="Morinaga M."/>
            <person name="Sasaki M."/>
            <person name="Togashi T."/>
            <person name="Oyama M."/>
            <person name="Hata H."/>
            <person name="Watanabe M."/>
            <person name="Komatsu T."/>
            <person name="Mizushima-Sugano J."/>
            <person name="Satoh T."/>
            <person name="Shirai Y."/>
            <person name="Takahashi Y."/>
            <person name="Nakagawa K."/>
            <person name="Okumura K."/>
            <person name="Nagase T."/>
            <person name="Nomura N."/>
            <person name="Kikuchi H."/>
            <person name="Masuho Y."/>
            <person name="Yamashita R."/>
            <person name="Nakai K."/>
            <person name="Yada T."/>
            <person name="Nakamura Y."/>
            <person name="Ohara O."/>
            <person name="Isogai T."/>
            <person name="Sugano S."/>
        </authorList>
    </citation>
    <scope>NUCLEOTIDE SEQUENCE [LARGE SCALE MRNA]</scope>
    <source>
        <tissue>Small intestine</tissue>
    </source>
</reference>
<reference key="2">
    <citation type="journal article" date="1977" name="Biochemistry">
        <title>Primary structure of human J chain: alignment of peptides from chemical and enzymatic hydrolyses.</title>
        <authorList>
            <person name="Mole J.E."/>
            <person name="Bhown A.S."/>
            <person name="Bennett J.C."/>
        </authorList>
    </citation>
    <scope>PRELIMINARY PROTEIN SEQUENCE OF 23-159</scope>
    <scope>PYROGLUTAMATE FORMATION AT GLN-23</scope>
</reference>
<reference key="3">
    <citation type="journal article" date="1985" name="J. Exp. Med.">
        <title>Human J chain gene. Structure and expression in B lymphoid cells.</title>
        <authorList>
            <person name="Max E.E."/>
            <person name="Korsmeyer S.J."/>
        </authorList>
    </citation>
    <scope>NUCLEOTIDE SEQUENCE [GENOMIC DNA] OF 23-159</scope>
</reference>
<reference key="4">
    <citation type="journal article" date="2015" name="J. Proteome Res.">
        <title>Human basal tear peptidome characterization by CID, HCD, and ETD followed by in silico and in vitro analyses for antimicrobial peptide identification.</title>
        <authorList>
            <person name="Azkargorta M."/>
            <person name="Soria J."/>
            <person name="Ojeda C."/>
            <person name="Guzman F."/>
            <person name="Acera A."/>
            <person name="Iloro I."/>
            <person name="Suarez T."/>
            <person name="Elortza F."/>
        </authorList>
    </citation>
    <scope>PROTEIN SEQUENCE OF 23-50</scope>
    <scope>IDENTIFICATION BY MASS SPECTROMETRY</scope>
    <scope>PYROGLUTAMATE FORMATION AT GLN-23</scope>
    <source>
        <tissue>Tear</tissue>
    </source>
</reference>
<reference key="5">
    <citation type="journal article" date="1992" name="Biochemistry">
        <title>Disulfide bond assignment in human J chain and its covalent pairing with immunoglobulin M.</title>
        <authorList>
            <person name="Frutiger S."/>
            <person name="Hughes G.J."/>
            <person name="Paquet N."/>
            <person name="Luethy R."/>
            <person name="Jaton J.-C."/>
        </authorList>
    </citation>
    <scope>DISULFIDE BONDS</scope>
    <scope>PARTIAL PROTEIN SEQUENCE</scope>
</reference>
<reference key="6">
    <citation type="journal article" date="2004" name="Mol. Cell. Proteomics">
        <title>A proteomic analysis of human bile.</title>
        <authorList>
            <person name="Kristiansen T.Z."/>
            <person name="Bunkenborg J."/>
            <person name="Gronborg M."/>
            <person name="Molina H."/>
            <person name="Thuluvath P.J."/>
            <person name="Argani P."/>
            <person name="Goggins M.G."/>
            <person name="Maitra A."/>
            <person name="Pandey A."/>
        </authorList>
    </citation>
    <scope>GLYCOSYLATION [LARGE SCALE ANALYSIS] AT ASN-71</scope>
    <source>
        <tissue>Bile</tissue>
    </source>
</reference>
<reference key="7">
    <citation type="journal article" date="2005" name="J. Proteome Res.">
        <title>Human plasma N-glycoproteome analysis by immunoaffinity subtraction, hydrazide chemistry, and mass spectrometry.</title>
        <authorList>
            <person name="Liu T."/>
            <person name="Qian W.-J."/>
            <person name="Gritsenko M.A."/>
            <person name="Camp D.G. II"/>
            <person name="Monroe M.E."/>
            <person name="Moore R.J."/>
            <person name="Smith R.D."/>
        </authorList>
    </citation>
    <scope>GLYCOSYLATION [LARGE SCALE ANALYSIS] AT ASN-71</scope>
    <source>
        <tissue>Plasma</tissue>
    </source>
</reference>
<reference key="8">
    <citation type="journal article" date="2006" name="J. Proteome Res.">
        <title>Identification of N-linked glycoproteins in human saliva by glycoprotein capture and mass spectrometry.</title>
        <authorList>
            <person name="Ramachandran P."/>
            <person name="Boontheung P."/>
            <person name="Xie Y."/>
            <person name="Sondej M."/>
            <person name="Wong D.T."/>
            <person name="Loo J.A."/>
        </authorList>
    </citation>
    <scope>GLYCOSYLATION [LARGE SCALE ANALYSIS] AT ASN-71</scope>
    <source>
        <tissue>Saliva</tissue>
    </source>
</reference>
<reference key="9">
    <citation type="journal article" date="2008" name="Proteomics">
        <title>Identification of N-linked glycoproteins in human milk by hydrophilic interaction liquid chromatography and mass spectrometry.</title>
        <authorList>
            <person name="Picariello G."/>
            <person name="Ferranti P."/>
            <person name="Mamone G."/>
            <person name="Roepstorff P."/>
            <person name="Addeo F."/>
        </authorList>
    </citation>
    <scope>GLYCOSYLATION [LARGE SCALE ANALYSIS] AT ASN-71</scope>
    <source>
        <tissue>Milk</tissue>
    </source>
</reference>
<reference key="10">
    <citation type="journal article" date="2009" name="J. Proteome Res.">
        <title>Glycoproteomics analysis of human liver tissue by combination of multiple enzyme digestion and hydrazide chemistry.</title>
        <authorList>
            <person name="Chen R."/>
            <person name="Jiang X."/>
            <person name="Sun D."/>
            <person name="Han G."/>
            <person name="Wang F."/>
            <person name="Ye M."/>
            <person name="Wang L."/>
            <person name="Zou H."/>
        </authorList>
    </citation>
    <scope>GLYCOSYLATION [LARGE SCALE ANALYSIS] AT ASN-71</scope>
    <source>
        <tissue>Liver</tissue>
    </source>
</reference>
<reference key="11">
    <citation type="journal article" date="2009" name="Mol. Cell. Proteomics">
        <title>A strategy for precise and large scale identification of core fucosylated glycoproteins.</title>
        <authorList>
            <person name="Jia W."/>
            <person name="Lu Z."/>
            <person name="Fu Y."/>
            <person name="Wang H.P."/>
            <person name="Wang L.H."/>
            <person name="Chi H."/>
            <person name="Yuan Z.F."/>
            <person name="Zheng Z.B."/>
            <person name="Song L.N."/>
            <person name="Han H.H."/>
            <person name="Liang Y.M."/>
            <person name="Wang J.L."/>
            <person name="Cai Y."/>
            <person name="Zhang Y.K."/>
            <person name="Deng Y.L."/>
            <person name="Ying W.T."/>
            <person name="He S.M."/>
            <person name="Qian X.H."/>
        </authorList>
    </citation>
    <scope>GLYCOSYLATION AT ASN-71</scope>
</reference>
<reference key="12">
    <citation type="journal article" date="2011" name="BMC Syst. Biol.">
        <title>Initial characterization of the human central proteome.</title>
        <authorList>
            <person name="Burkard T.R."/>
            <person name="Planyavsky M."/>
            <person name="Kaupe I."/>
            <person name="Breitwieser F.P."/>
            <person name="Buerckstuemmer T."/>
            <person name="Bennett K.L."/>
            <person name="Superti-Furga G."/>
            <person name="Colinge J."/>
        </authorList>
    </citation>
    <scope>IDENTIFICATION BY MASS SPECTROMETRY [LARGE SCALE ANALYSIS]</scope>
</reference>
<reference key="13">
    <citation type="journal article" date="2020" name="Science">
        <title>Structure of the secretory immunoglobulin A core.</title>
        <authorList>
            <person name="Kumar N."/>
            <person name="Arthur C.P."/>
            <person name="Ciferri C."/>
            <person name="Matsumoto M.L."/>
        </authorList>
    </citation>
    <scope>STRUCTURE BY ELECTRON MICROSCOPY (2.90 ANGSTROMS) OF 23-159 IN COMPLEX WITH PIGR AND IGHA1 OR IGHA2</scope>
    <scope>SUBUNIT</scope>
</reference>
<reference key="14">
    <citation type="journal article" date="2020" name="Science">
        <title>Structural insights into immunoglobulin M.</title>
        <authorList>
            <person name="Li Y."/>
            <person name="Wang G."/>
            <person name="Li N."/>
            <person name="Wang Y."/>
            <person name="Zhu Q."/>
            <person name="Chu H."/>
            <person name="Wu W."/>
            <person name="Tan Y."/>
            <person name="Tan Y."/>
            <person name="Yu F."/>
            <person name="Su X.D."/>
            <person name="Gao N."/>
            <person name="Xiao J."/>
        </authorList>
    </citation>
    <scope>STRUCTURE BY ELECTRON MICROSCOPY (3.40 ANGSTROMS) OF 24-159 IN COMPLEX WITH IGHM AND PIGR</scope>
    <scope>DISULFIDE BONDS</scope>
    <scope>SUBUNIT</scope>
</reference>
<reference key="15">
    <citation type="journal article" date="2023" name="Nat. Struct. Mol. Biol.">
        <title>Structural basis for Fc receptor recognition of immunoglobulin M.</title>
        <authorList>
            <person name="Chen Q."/>
            <person name="Menon R.P."/>
            <person name="Masino L."/>
            <person name="Tolar P."/>
            <person name="Rosenthal P.B."/>
        </authorList>
    </citation>
    <scope>STRUCTURE BY ELECTRON MICROSCOPY (3.10 ANGSTROMS) OF 26-157 IN COMPLEX WITH IGHM AND FCMR</scope>
    <scope>SUBUNIT</scope>
</reference>
<dbReference type="EMBL" id="AK312014">
    <property type="protein sequence ID" value="BAG34952.1"/>
    <property type="molecule type" value="mRNA"/>
</dbReference>
<dbReference type="EMBL" id="M12759">
    <property type="protein sequence ID" value="AAA58902.1"/>
    <property type="molecule type" value="Genomic_DNA"/>
</dbReference>
<dbReference type="EMBL" id="M12378">
    <property type="protein sequence ID" value="AAA58902.1"/>
    <property type="status" value="JOINED"/>
    <property type="molecule type" value="Genomic_DNA"/>
</dbReference>
<dbReference type="CCDS" id="CCDS3545.1"/>
<dbReference type="PIR" id="A01859">
    <property type="entry name" value="JIHU"/>
</dbReference>
<dbReference type="RefSeq" id="NP_653247.1">
    <property type="nucleotide sequence ID" value="NM_144646.4"/>
</dbReference>
<dbReference type="RefSeq" id="XP_006714274.1">
    <property type="nucleotide sequence ID" value="XM_006714211.2"/>
</dbReference>
<dbReference type="RefSeq" id="XP_006714275.1">
    <property type="nucleotide sequence ID" value="XM_006714212.2"/>
</dbReference>
<dbReference type="RefSeq" id="XP_011530227.1">
    <property type="nucleotide sequence ID" value="XM_011531925.1"/>
</dbReference>
<dbReference type="RefSeq" id="XP_011530228.1">
    <property type="nucleotide sequence ID" value="XM_011531926.1"/>
</dbReference>
<dbReference type="RefSeq" id="XP_054205928.1">
    <property type="nucleotide sequence ID" value="XM_054349953.1"/>
</dbReference>
<dbReference type="RefSeq" id="XP_054205929.1">
    <property type="nucleotide sequence ID" value="XM_054349954.1"/>
</dbReference>
<dbReference type="RefSeq" id="XP_054205930.1">
    <property type="nucleotide sequence ID" value="XM_054349955.1"/>
</dbReference>
<dbReference type="PDB" id="6KXS">
    <property type="method" value="EM"/>
    <property type="resolution" value="3.40 A"/>
    <property type="chains" value="J=24-159"/>
</dbReference>
<dbReference type="PDB" id="6LX3">
    <property type="method" value="EM"/>
    <property type="resolution" value="3.15 A"/>
    <property type="chains" value="J=1-159"/>
</dbReference>
<dbReference type="PDB" id="6LXW">
    <property type="method" value="EM"/>
    <property type="resolution" value="3.27 A"/>
    <property type="chains" value="J=1-159"/>
</dbReference>
<dbReference type="PDB" id="6UE7">
    <property type="method" value="EM"/>
    <property type="resolution" value="2.90 A"/>
    <property type="chains" value="D=23-159"/>
</dbReference>
<dbReference type="PDB" id="6UE8">
    <property type="method" value="EM"/>
    <property type="resolution" value="3.00 A"/>
    <property type="chains" value="D=23-159"/>
</dbReference>
<dbReference type="PDB" id="6UE9">
    <property type="method" value="EM"/>
    <property type="resolution" value="2.90 A"/>
    <property type="chains" value="D=23-159"/>
</dbReference>
<dbReference type="PDB" id="6UEA">
    <property type="method" value="EM"/>
    <property type="resolution" value="3.00 A"/>
    <property type="chains" value="D=23-159"/>
</dbReference>
<dbReference type="PDB" id="7K0C">
    <property type="method" value="EM"/>
    <property type="resolution" value="3.30 A"/>
    <property type="chains" value="D=23-159"/>
</dbReference>
<dbReference type="PDB" id="7Y09">
    <property type="method" value="EM"/>
    <property type="resolution" value="3.71 A"/>
    <property type="chains" value="J=24-159"/>
</dbReference>
<dbReference type="PDB" id="7Y0H">
    <property type="method" value="EM"/>
    <property type="resolution" value="3.56 A"/>
    <property type="chains" value="J=24-159"/>
</dbReference>
<dbReference type="PDB" id="7Y0J">
    <property type="method" value="EM"/>
    <property type="resolution" value="3.62 A"/>
    <property type="chains" value="J=24-159"/>
</dbReference>
<dbReference type="PDB" id="7YG2">
    <property type="method" value="EM"/>
    <property type="resolution" value="3.32 A"/>
    <property type="chains" value="J=24-159"/>
</dbReference>
<dbReference type="PDB" id="7YSG">
    <property type="method" value="EM"/>
    <property type="resolution" value="3.18 A"/>
    <property type="chains" value="J=24-159"/>
</dbReference>
<dbReference type="PDB" id="7YTC">
    <property type="method" value="EM"/>
    <property type="resolution" value="3.39 A"/>
    <property type="chains" value="J=24-159"/>
</dbReference>
<dbReference type="PDB" id="7YTD">
    <property type="method" value="EM"/>
    <property type="resolution" value="3.71 A"/>
    <property type="chains" value="J=24-159"/>
</dbReference>
<dbReference type="PDB" id="8ADY">
    <property type="method" value="EM"/>
    <property type="resolution" value="5.20 A"/>
    <property type="chains" value="J=24-159"/>
</dbReference>
<dbReference type="PDB" id="8ADZ">
    <property type="method" value="EM"/>
    <property type="resolution" value="6.70 A"/>
    <property type="chains" value="J=24-159"/>
</dbReference>
<dbReference type="PDB" id="8AE0">
    <property type="method" value="EM"/>
    <property type="resolution" value="7.10 A"/>
    <property type="chains" value="J=24-159"/>
</dbReference>
<dbReference type="PDB" id="8AE2">
    <property type="method" value="EM"/>
    <property type="resolution" value="8.50 A"/>
    <property type="chains" value="J=24-159"/>
</dbReference>
<dbReference type="PDB" id="8AE3">
    <property type="method" value="EM"/>
    <property type="resolution" value="6.80 A"/>
    <property type="chains" value="J=24-159"/>
</dbReference>
<dbReference type="PDB" id="8BPE">
    <property type="method" value="EM"/>
    <property type="resolution" value="3.63 A"/>
    <property type="chains" value="J=1-159"/>
</dbReference>
<dbReference type="PDB" id="8BPF">
    <property type="method" value="EM"/>
    <property type="resolution" value="3.50 A"/>
    <property type="chains" value="J=1-159"/>
</dbReference>
<dbReference type="PDB" id="8GZN">
    <property type="method" value="EM"/>
    <property type="resolution" value="3.60 A"/>
    <property type="chains" value="J=24-159"/>
</dbReference>
<dbReference type="PDB" id="8R83">
    <property type="method" value="EM"/>
    <property type="resolution" value="3.57 A"/>
    <property type="chains" value="J=1-159"/>
</dbReference>
<dbReference type="PDB" id="8R84">
    <property type="method" value="EM"/>
    <property type="resolution" value="3.60 A"/>
    <property type="chains" value="J=1-159"/>
</dbReference>
<dbReference type="PDB" id="8SKU">
    <property type="method" value="EM"/>
    <property type="resolution" value="3.20 A"/>
    <property type="chains" value="J=23-159"/>
</dbReference>
<dbReference type="PDB" id="8SKV">
    <property type="method" value="EM"/>
    <property type="resolution" value="3.10 A"/>
    <property type="chains" value="J=23-159"/>
</dbReference>
<dbReference type="PDB" id="8WYR">
    <property type="method" value="EM"/>
    <property type="resolution" value="3.39 A"/>
    <property type="chains" value="J=1-159"/>
</dbReference>
<dbReference type="PDB" id="8WYS">
    <property type="method" value="EM"/>
    <property type="resolution" value="3.41 A"/>
    <property type="chains" value="J=1-159"/>
</dbReference>
<dbReference type="PDB" id="9ARV">
    <property type="method" value="EM"/>
    <property type="resolution" value="3.60 A"/>
    <property type="chains" value="J=1-159"/>
</dbReference>
<dbReference type="PDBsum" id="6KXS"/>
<dbReference type="PDBsum" id="6LX3"/>
<dbReference type="PDBsum" id="6LXW"/>
<dbReference type="PDBsum" id="6UE7"/>
<dbReference type="PDBsum" id="6UE8"/>
<dbReference type="PDBsum" id="6UE9"/>
<dbReference type="PDBsum" id="6UEA"/>
<dbReference type="PDBsum" id="7K0C"/>
<dbReference type="PDBsum" id="7Y09"/>
<dbReference type="PDBsum" id="7Y0H"/>
<dbReference type="PDBsum" id="7Y0J"/>
<dbReference type="PDBsum" id="7YG2"/>
<dbReference type="PDBsum" id="7YSG"/>
<dbReference type="PDBsum" id="7YTC"/>
<dbReference type="PDBsum" id="7YTD"/>
<dbReference type="PDBsum" id="8ADY"/>
<dbReference type="PDBsum" id="8ADZ"/>
<dbReference type="PDBsum" id="8AE0"/>
<dbReference type="PDBsum" id="8AE2"/>
<dbReference type="PDBsum" id="8AE3"/>
<dbReference type="PDBsum" id="8BPE"/>
<dbReference type="PDBsum" id="8BPF"/>
<dbReference type="PDBsum" id="8GZN"/>
<dbReference type="PDBsum" id="8R83"/>
<dbReference type="PDBsum" id="8R84"/>
<dbReference type="PDBsum" id="8SKU"/>
<dbReference type="PDBsum" id="8SKV"/>
<dbReference type="PDBsum" id="8WYR"/>
<dbReference type="PDBsum" id="8WYS"/>
<dbReference type="PDBsum" id="9ARV"/>
<dbReference type="EMDB" id="EMD-0782"/>
<dbReference type="EMDB" id="EMD-13921"/>
<dbReference type="EMDB" id="EMD-15375"/>
<dbReference type="EMDB" id="EMD-15376"/>
<dbReference type="EMDB" id="EMD-15377"/>
<dbReference type="EMDB" id="EMD-15379"/>
<dbReference type="EMDB" id="EMD-15380"/>
<dbReference type="EMDB" id="EMD-16150"/>
<dbReference type="EMDB" id="EMD-16151"/>
<dbReference type="EMDB" id="EMD-18993"/>
<dbReference type="EMDB" id="EMD-18994"/>
<dbReference type="EMDB" id="EMD-20749"/>
<dbReference type="EMDB" id="EMD-20750"/>
<dbReference type="EMDB" id="EMD-20751"/>
<dbReference type="EMDB" id="EMD-20752"/>
<dbReference type="EMDB" id="EMD-22591"/>
<dbReference type="EMDB" id="EMD-30004"/>
<dbReference type="EMDB" id="EMD-30008"/>
<dbReference type="EMDB" id="EMD-33538"/>
<dbReference type="EMDB" id="EMD-33542"/>
<dbReference type="EMDB" id="EMD-33547"/>
<dbReference type="EMDB" id="EMD-33805"/>
<dbReference type="EMDB" id="EMD-34074"/>
<dbReference type="EMDB" id="EMD-34085"/>
<dbReference type="EMDB" id="EMD-34086"/>
<dbReference type="EMDB" id="EMD-34399"/>
<dbReference type="EMDB" id="EMD-37936"/>
<dbReference type="EMDB" id="EMD-37937"/>
<dbReference type="EMDB" id="EMD-40567"/>
<dbReference type="EMDB" id="EMD-40568"/>
<dbReference type="EMDB" id="EMD-43795"/>
<dbReference type="SMR" id="P01591"/>
<dbReference type="BioGRID" id="109732">
    <property type="interactions" value="82"/>
</dbReference>
<dbReference type="FunCoup" id="P01591">
    <property type="interactions" value="249"/>
</dbReference>
<dbReference type="IntAct" id="P01591">
    <property type="interactions" value="65"/>
</dbReference>
<dbReference type="MINT" id="P01591"/>
<dbReference type="STRING" id="9606.ENSP00000440066"/>
<dbReference type="DrugBank" id="DB01593">
    <property type="generic name" value="Zinc"/>
</dbReference>
<dbReference type="DrugBank" id="DB14487">
    <property type="generic name" value="Zinc acetate"/>
</dbReference>
<dbReference type="DrugBank" id="DB14533">
    <property type="generic name" value="Zinc chloride"/>
</dbReference>
<dbReference type="DrugBank" id="DB14548">
    <property type="generic name" value="Zinc sulfate, unspecified form"/>
</dbReference>
<dbReference type="GlyConnect" id="277">
    <property type="glycosylation" value="86 N-Linked glycans (2 sites)"/>
</dbReference>
<dbReference type="GlyCosmos" id="P01591">
    <property type="glycosylation" value="4 sites, 94 glycans"/>
</dbReference>
<dbReference type="GlyGen" id="P01591">
    <property type="glycosylation" value="7 sites, 162 N-linked glycans (1 site), 2 O-linked glycans (2 sites)"/>
</dbReference>
<dbReference type="iPTMnet" id="P01591"/>
<dbReference type="PhosphoSitePlus" id="P01591"/>
<dbReference type="BioMuta" id="JCHAIN"/>
<dbReference type="CPTAC" id="CPTAC-659"/>
<dbReference type="jPOST" id="P01591"/>
<dbReference type="MassIVE" id="P01591"/>
<dbReference type="PaxDb" id="9606-ENSP00000254801"/>
<dbReference type="PeptideAtlas" id="P01591"/>
<dbReference type="PRIDE" id="P01591"/>
<dbReference type="ProteomicsDB" id="51394"/>
<dbReference type="Pumba" id="P01591"/>
<dbReference type="Antibodypedia" id="12875">
    <property type="antibodies" value="360 antibodies from 31 providers"/>
</dbReference>
<dbReference type="DNASU" id="3512"/>
<dbReference type="Ensembl" id="ENST00000254801.9">
    <property type="protein sequence ID" value="ENSP00000254801.4"/>
    <property type="gene ID" value="ENSG00000132465.12"/>
</dbReference>
<dbReference type="Ensembl" id="ENST00000510437.5">
    <property type="protein sequence ID" value="ENSP00000426687.1"/>
    <property type="gene ID" value="ENSG00000132465.12"/>
</dbReference>
<dbReference type="GeneID" id="3512"/>
<dbReference type="KEGG" id="hsa:3512"/>
<dbReference type="MANE-Select" id="ENST00000254801.9">
    <property type="protein sequence ID" value="ENSP00000254801.4"/>
    <property type="RefSeq nucleotide sequence ID" value="NM_144646.4"/>
    <property type="RefSeq protein sequence ID" value="NP_653247.1"/>
</dbReference>
<dbReference type="UCSC" id="uc003hfn.5">
    <property type="organism name" value="human"/>
</dbReference>
<dbReference type="AGR" id="HGNC:5713"/>
<dbReference type="CTD" id="3512"/>
<dbReference type="DisGeNET" id="3512"/>
<dbReference type="GeneCards" id="JCHAIN"/>
<dbReference type="HGNC" id="HGNC:5713">
    <property type="gene designation" value="JCHAIN"/>
</dbReference>
<dbReference type="HPA" id="ENSG00000132465">
    <property type="expression patterns" value="Tissue enhanced (breast, intestine, stomach)"/>
</dbReference>
<dbReference type="MIM" id="147790">
    <property type="type" value="gene"/>
</dbReference>
<dbReference type="neXtProt" id="NX_P01591"/>
<dbReference type="OpenTargets" id="ENSG00000132465"/>
<dbReference type="PharmGKB" id="PA29733"/>
<dbReference type="VEuPathDB" id="HostDB:ENSG00000132465"/>
<dbReference type="eggNOG" id="ENOG502RZF4">
    <property type="taxonomic scope" value="Eukaryota"/>
</dbReference>
<dbReference type="GeneTree" id="ENSGT00390000012791"/>
<dbReference type="HOGENOM" id="CLU_1651635_0_0_1"/>
<dbReference type="InParanoid" id="P01591"/>
<dbReference type="OMA" id="KCQCARV"/>
<dbReference type="OrthoDB" id="9936784at2759"/>
<dbReference type="PAN-GO" id="P01591">
    <property type="GO annotations" value="3 GO annotations based on evolutionary models"/>
</dbReference>
<dbReference type="PhylomeDB" id="P01591"/>
<dbReference type="TreeFam" id="TF335878"/>
<dbReference type="PathwayCommons" id="P01591"/>
<dbReference type="Reactome" id="R-HSA-202733">
    <property type="pathway name" value="Cell surface interactions at the vascular wall"/>
</dbReference>
<dbReference type="Reactome" id="R-HSA-2168880">
    <property type="pathway name" value="Scavenging of heme from plasma"/>
</dbReference>
<dbReference type="SignaLink" id="P01591"/>
<dbReference type="BioGRID-ORCS" id="3512">
    <property type="hits" value="4 hits in 1144 CRISPR screens"/>
</dbReference>
<dbReference type="ChiTaRS" id="JCHAIN">
    <property type="organism name" value="human"/>
</dbReference>
<dbReference type="GeneWiki" id="IGJ"/>
<dbReference type="GenomeRNAi" id="3512"/>
<dbReference type="Pharos" id="P01591">
    <property type="development level" value="Tbio"/>
</dbReference>
<dbReference type="PRO" id="PR:P01591"/>
<dbReference type="Proteomes" id="UP000005640">
    <property type="component" value="Chromosome 4"/>
</dbReference>
<dbReference type="RNAct" id="P01591">
    <property type="molecule type" value="protein"/>
</dbReference>
<dbReference type="Bgee" id="ENSG00000132465">
    <property type="expression patterns" value="Expressed in rectum and 153 other cell types or tissues"/>
</dbReference>
<dbReference type="ExpressionAtlas" id="P01591">
    <property type="expression patterns" value="baseline and differential"/>
</dbReference>
<dbReference type="GO" id="GO:0072562">
    <property type="term" value="C:blood microparticle"/>
    <property type="evidence" value="ECO:0007005"/>
    <property type="project" value="UniProtKB"/>
</dbReference>
<dbReference type="GO" id="GO:0071750">
    <property type="term" value="C:dimeric IgA immunoglobulin complex"/>
    <property type="evidence" value="ECO:0000315"/>
    <property type="project" value="UniProtKB"/>
</dbReference>
<dbReference type="GO" id="GO:0070062">
    <property type="term" value="C:extracellular exosome"/>
    <property type="evidence" value="ECO:0007005"/>
    <property type="project" value="UniProtKB"/>
</dbReference>
<dbReference type="GO" id="GO:0005576">
    <property type="term" value="C:extracellular region"/>
    <property type="evidence" value="ECO:0000304"/>
    <property type="project" value="Reactome"/>
</dbReference>
<dbReference type="GO" id="GO:0005615">
    <property type="term" value="C:extracellular space"/>
    <property type="evidence" value="ECO:0000314"/>
    <property type="project" value="UniProtKB"/>
</dbReference>
<dbReference type="GO" id="GO:0071748">
    <property type="term" value="C:monomeric IgA immunoglobulin complex"/>
    <property type="evidence" value="ECO:0000314"/>
    <property type="project" value="UniProtKB"/>
</dbReference>
<dbReference type="GO" id="GO:0071756">
    <property type="term" value="C:pentameric IgM immunoglobulin complex"/>
    <property type="evidence" value="ECO:0000314"/>
    <property type="project" value="UniProtKB"/>
</dbReference>
<dbReference type="GO" id="GO:0071752">
    <property type="term" value="C:secretory dimeric IgA immunoglobulin complex"/>
    <property type="evidence" value="ECO:0000314"/>
    <property type="project" value="UniProtKB"/>
</dbReference>
<dbReference type="GO" id="GO:0071751">
    <property type="term" value="C:secretory IgA immunoglobulin complex"/>
    <property type="evidence" value="ECO:0000314"/>
    <property type="project" value="UniProtKB"/>
</dbReference>
<dbReference type="GO" id="GO:0003823">
    <property type="term" value="F:antigen binding"/>
    <property type="evidence" value="ECO:0000303"/>
    <property type="project" value="UniProtKB"/>
</dbReference>
<dbReference type="GO" id="GO:0019862">
    <property type="term" value="F:IgA binding"/>
    <property type="evidence" value="ECO:0000315"/>
    <property type="project" value="UniProtKB"/>
</dbReference>
<dbReference type="GO" id="GO:0034987">
    <property type="term" value="F:immunoglobulin receptor binding"/>
    <property type="evidence" value="ECO:0007669"/>
    <property type="project" value="Ensembl"/>
</dbReference>
<dbReference type="GO" id="GO:0042803">
    <property type="term" value="F:protein homodimerization activity"/>
    <property type="evidence" value="ECO:0000314"/>
    <property type="project" value="UniProtKB"/>
</dbReference>
<dbReference type="GO" id="GO:0030674">
    <property type="term" value="F:protein-macromolecule adaptor activity"/>
    <property type="evidence" value="ECO:0007669"/>
    <property type="project" value="Ensembl"/>
</dbReference>
<dbReference type="GO" id="GO:0002250">
    <property type="term" value="P:adaptive immune response"/>
    <property type="evidence" value="ECO:0000314"/>
    <property type="project" value="UniProtKB"/>
</dbReference>
<dbReference type="GO" id="GO:0019731">
    <property type="term" value="P:antibacterial humoral response"/>
    <property type="evidence" value="ECO:0000314"/>
    <property type="project" value="UniProtKB"/>
</dbReference>
<dbReference type="GO" id="GO:0003094">
    <property type="term" value="P:glomerular filtration"/>
    <property type="evidence" value="ECO:0000315"/>
    <property type="project" value="UniProtKB"/>
</dbReference>
<dbReference type="GO" id="GO:0006959">
    <property type="term" value="P:humoral immune response"/>
    <property type="evidence" value="ECO:0000318"/>
    <property type="project" value="GO_Central"/>
</dbReference>
<dbReference type="GO" id="GO:0006955">
    <property type="term" value="P:immune response"/>
    <property type="evidence" value="ECO:0000303"/>
    <property type="project" value="UniProtKB"/>
</dbReference>
<dbReference type="GO" id="GO:0045087">
    <property type="term" value="P:innate immune response"/>
    <property type="evidence" value="ECO:0000314"/>
    <property type="project" value="UniProtKB"/>
</dbReference>
<dbReference type="GO" id="GO:0060267">
    <property type="term" value="P:positive regulation of respiratory burst"/>
    <property type="evidence" value="ECO:0000314"/>
    <property type="project" value="UniProtKB"/>
</dbReference>
<dbReference type="GO" id="GO:0065003">
    <property type="term" value="P:protein-containing complex assembly"/>
    <property type="evidence" value="ECO:0000315"/>
    <property type="project" value="UniProtKB"/>
</dbReference>
<dbReference type="InterPro" id="IPR024110">
    <property type="entry name" value="Ig_J"/>
</dbReference>
<dbReference type="PANTHER" id="PTHR10070">
    <property type="entry name" value="IMMUNOGLOBULIN J CHAIN"/>
    <property type="match status" value="1"/>
</dbReference>
<dbReference type="PANTHER" id="PTHR10070:SF2">
    <property type="entry name" value="IMMUNOGLOBULIN J CHAIN"/>
    <property type="match status" value="1"/>
</dbReference>
<dbReference type="Pfam" id="PF15097">
    <property type="entry name" value="Ig_J_chain"/>
    <property type="match status" value="1"/>
</dbReference>